<gene>
    <name evidence="1" type="primary">ihfA</name>
    <name evidence="1" type="synonym">himA</name>
    <name type="ordered locus">Xfasm12_2093</name>
</gene>
<evidence type="ECO:0000255" key="1">
    <source>
        <dbReference type="HAMAP-Rule" id="MF_00380"/>
    </source>
</evidence>
<comment type="function">
    <text evidence="1">This protein is one of the two subunits of integration host factor, a specific DNA-binding protein that functions in genetic recombination as well as in transcriptional and translational control.</text>
</comment>
<comment type="subunit">
    <text evidence="1">Heterodimer of an alpha and a beta chain.</text>
</comment>
<comment type="similarity">
    <text evidence="1">Belongs to the bacterial histone-like protein family.</text>
</comment>
<feature type="chain" id="PRO_1000122176" description="Integration host factor subunit alpha">
    <location>
        <begin position="1"/>
        <end position="99"/>
    </location>
</feature>
<name>IHFA_XYLFM</name>
<protein>
    <recommendedName>
        <fullName evidence="1">Integration host factor subunit alpha</fullName>
        <shortName evidence="1">IHF-alpha</shortName>
    </recommendedName>
</protein>
<reference key="1">
    <citation type="journal article" date="2010" name="J. Bacteriol.">
        <title>Whole genome sequences of two Xylella fastidiosa strains (M12 and M23) causing almond leaf scorch disease in California.</title>
        <authorList>
            <person name="Chen J."/>
            <person name="Xie G."/>
            <person name="Han S."/>
            <person name="Chertkov O."/>
            <person name="Sims D."/>
            <person name="Civerolo E.L."/>
        </authorList>
    </citation>
    <scope>NUCLEOTIDE SEQUENCE [LARGE SCALE GENOMIC DNA]</scope>
    <source>
        <strain>M12</strain>
    </source>
</reference>
<dbReference type="EMBL" id="CP000941">
    <property type="protein sequence ID" value="ACA12955.1"/>
    <property type="molecule type" value="Genomic_DNA"/>
</dbReference>
<dbReference type="RefSeq" id="WP_004084568.1">
    <property type="nucleotide sequence ID" value="NC_010513.1"/>
</dbReference>
<dbReference type="SMR" id="B0U5D7"/>
<dbReference type="KEGG" id="xfm:Xfasm12_2093"/>
<dbReference type="HOGENOM" id="CLU_105066_1_3_6"/>
<dbReference type="GO" id="GO:0005829">
    <property type="term" value="C:cytosol"/>
    <property type="evidence" value="ECO:0007669"/>
    <property type="project" value="TreeGrafter"/>
</dbReference>
<dbReference type="GO" id="GO:0003677">
    <property type="term" value="F:DNA binding"/>
    <property type="evidence" value="ECO:0007669"/>
    <property type="project" value="UniProtKB-UniRule"/>
</dbReference>
<dbReference type="GO" id="GO:0030527">
    <property type="term" value="F:structural constituent of chromatin"/>
    <property type="evidence" value="ECO:0007669"/>
    <property type="project" value="InterPro"/>
</dbReference>
<dbReference type="GO" id="GO:0006310">
    <property type="term" value="P:DNA recombination"/>
    <property type="evidence" value="ECO:0007669"/>
    <property type="project" value="UniProtKB-UniRule"/>
</dbReference>
<dbReference type="GO" id="GO:0009893">
    <property type="term" value="P:positive regulation of metabolic process"/>
    <property type="evidence" value="ECO:0007669"/>
    <property type="project" value="UniProtKB-ARBA"/>
</dbReference>
<dbReference type="GO" id="GO:0006355">
    <property type="term" value="P:regulation of DNA-templated transcription"/>
    <property type="evidence" value="ECO:0007669"/>
    <property type="project" value="UniProtKB-UniRule"/>
</dbReference>
<dbReference type="GO" id="GO:0006417">
    <property type="term" value="P:regulation of translation"/>
    <property type="evidence" value="ECO:0007669"/>
    <property type="project" value="UniProtKB-UniRule"/>
</dbReference>
<dbReference type="CDD" id="cd13835">
    <property type="entry name" value="IHF_A"/>
    <property type="match status" value="1"/>
</dbReference>
<dbReference type="FunFam" id="4.10.520.10:FF:000002">
    <property type="entry name" value="Integration host factor subunit alpha"/>
    <property type="match status" value="1"/>
</dbReference>
<dbReference type="Gene3D" id="4.10.520.10">
    <property type="entry name" value="IHF-like DNA-binding proteins"/>
    <property type="match status" value="1"/>
</dbReference>
<dbReference type="HAMAP" id="MF_00380">
    <property type="entry name" value="IHF_alpha"/>
    <property type="match status" value="1"/>
</dbReference>
<dbReference type="InterPro" id="IPR000119">
    <property type="entry name" value="Hist_DNA-bd"/>
</dbReference>
<dbReference type="InterPro" id="IPR020816">
    <property type="entry name" value="Histone-like_DNA-bd_CS"/>
</dbReference>
<dbReference type="InterPro" id="IPR010992">
    <property type="entry name" value="IHF-like_DNA-bd_dom_sf"/>
</dbReference>
<dbReference type="InterPro" id="IPR005684">
    <property type="entry name" value="IHF_alpha"/>
</dbReference>
<dbReference type="NCBIfam" id="TIGR00987">
    <property type="entry name" value="himA"/>
    <property type="match status" value="1"/>
</dbReference>
<dbReference type="NCBIfam" id="NF001401">
    <property type="entry name" value="PRK00285.1"/>
    <property type="match status" value="1"/>
</dbReference>
<dbReference type="PANTHER" id="PTHR33175">
    <property type="entry name" value="DNA-BINDING PROTEIN HU"/>
    <property type="match status" value="1"/>
</dbReference>
<dbReference type="PANTHER" id="PTHR33175:SF2">
    <property type="entry name" value="INTEGRATION HOST FACTOR SUBUNIT ALPHA"/>
    <property type="match status" value="1"/>
</dbReference>
<dbReference type="Pfam" id="PF00216">
    <property type="entry name" value="Bac_DNA_binding"/>
    <property type="match status" value="1"/>
</dbReference>
<dbReference type="PRINTS" id="PR01727">
    <property type="entry name" value="DNABINDINGHU"/>
</dbReference>
<dbReference type="SMART" id="SM00411">
    <property type="entry name" value="BHL"/>
    <property type="match status" value="1"/>
</dbReference>
<dbReference type="SUPFAM" id="SSF47729">
    <property type="entry name" value="IHF-like DNA-binding proteins"/>
    <property type="match status" value="1"/>
</dbReference>
<dbReference type="PROSITE" id="PS00045">
    <property type="entry name" value="HISTONE_LIKE"/>
    <property type="match status" value="1"/>
</dbReference>
<accession>B0U5D7</accession>
<proteinExistence type="inferred from homology"/>
<sequence>MALTKAEMVERLFDEVGLNKREAKEFVDAFFDLLRDALEQGKEIKLSGFGNFELRCKNQRPGRNPKTGEEIPISARTVVTFRSGQKLKERVDAYVGSRQ</sequence>
<keyword id="KW-0233">DNA recombination</keyword>
<keyword id="KW-0238">DNA-binding</keyword>
<keyword id="KW-0804">Transcription</keyword>
<keyword id="KW-0805">Transcription regulation</keyword>
<keyword id="KW-0810">Translation regulation</keyword>
<organism>
    <name type="scientific">Xylella fastidiosa (strain M12)</name>
    <dbReference type="NCBI Taxonomy" id="405440"/>
    <lineage>
        <taxon>Bacteria</taxon>
        <taxon>Pseudomonadati</taxon>
        <taxon>Pseudomonadota</taxon>
        <taxon>Gammaproteobacteria</taxon>
        <taxon>Lysobacterales</taxon>
        <taxon>Lysobacteraceae</taxon>
        <taxon>Xylella</taxon>
    </lineage>
</organism>